<protein>
    <recommendedName>
        <fullName evidence="1">5-methyltetrahydropteroyltriglutamate--homocysteine methyltransferase</fullName>
        <ecNumber evidence="1">2.1.1.14</ecNumber>
    </recommendedName>
    <alternativeName>
        <fullName evidence="1">Cobalamin-independent methionine synthase</fullName>
    </alternativeName>
    <alternativeName>
        <fullName evidence="1">Methionine synthase, vitamin-B12 independent isozyme</fullName>
    </alternativeName>
</protein>
<accession>Q7MZ74</accession>
<reference key="1">
    <citation type="journal article" date="2003" name="Nat. Biotechnol.">
        <title>The genome sequence of the entomopathogenic bacterium Photorhabdus luminescens.</title>
        <authorList>
            <person name="Duchaud E."/>
            <person name="Rusniok C."/>
            <person name="Frangeul L."/>
            <person name="Buchrieser C."/>
            <person name="Givaudan A."/>
            <person name="Taourit S."/>
            <person name="Bocs S."/>
            <person name="Boursaux-Eude C."/>
            <person name="Chandler M."/>
            <person name="Charles J.-F."/>
            <person name="Dassa E."/>
            <person name="Derose R."/>
            <person name="Derzelle S."/>
            <person name="Freyssinet G."/>
            <person name="Gaudriault S."/>
            <person name="Medigue C."/>
            <person name="Lanois A."/>
            <person name="Powell K."/>
            <person name="Siguier P."/>
            <person name="Vincent R."/>
            <person name="Wingate V."/>
            <person name="Zouine M."/>
            <person name="Glaser P."/>
            <person name="Boemare N."/>
            <person name="Danchin A."/>
            <person name="Kunst F."/>
        </authorList>
    </citation>
    <scope>NUCLEOTIDE SEQUENCE [LARGE SCALE GENOMIC DNA]</scope>
    <source>
        <strain>DSM 15139 / CIP 105565 / TT01</strain>
    </source>
</reference>
<evidence type="ECO:0000255" key="1">
    <source>
        <dbReference type="HAMAP-Rule" id="MF_00172"/>
    </source>
</evidence>
<keyword id="KW-0028">Amino-acid biosynthesis</keyword>
<keyword id="KW-0479">Metal-binding</keyword>
<keyword id="KW-0486">Methionine biosynthesis</keyword>
<keyword id="KW-0489">Methyltransferase</keyword>
<keyword id="KW-1185">Reference proteome</keyword>
<keyword id="KW-0677">Repeat</keyword>
<keyword id="KW-0808">Transferase</keyword>
<keyword id="KW-0862">Zinc</keyword>
<proteinExistence type="inferred from homology"/>
<organism>
    <name type="scientific">Photorhabdus laumondii subsp. laumondii (strain DSM 15139 / CIP 105565 / TT01)</name>
    <name type="common">Photorhabdus luminescens subsp. laumondii</name>
    <dbReference type="NCBI Taxonomy" id="243265"/>
    <lineage>
        <taxon>Bacteria</taxon>
        <taxon>Pseudomonadati</taxon>
        <taxon>Pseudomonadota</taxon>
        <taxon>Gammaproteobacteria</taxon>
        <taxon>Enterobacterales</taxon>
        <taxon>Morganellaceae</taxon>
        <taxon>Photorhabdus</taxon>
    </lineage>
</organism>
<dbReference type="EC" id="2.1.1.14" evidence="1"/>
<dbReference type="EMBL" id="BX571873">
    <property type="protein sequence ID" value="CAE16792.1"/>
    <property type="molecule type" value="Genomic_DNA"/>
</dbReference>
<dbReference type="RefSeq" id="WP_011148510.1">
    <property type="nucleotide sequence ID" value="NC_005126.1"/>
</dbReference>
<dbReference type="SMR" id="Q7MZ74"/>
<dbReference type="STRING" id="243265.plu4420"/>
<dbReference type="GeneID" id="48850635"/>
<dbReference type="KEGG" id="plu:plu4420"/>
<dbReference type="eggNOG" id="COG0620">
    <property type="taxonomic scope" value="Bacteria"/>
</dbReference>
<dbReference type="HOGENOM" id="CLU_013175_0_0_6"/>
<dbReference type="OrthoDB" id="244285at2"/>
<dbReference type="UniPathway" id="UPA00051">
    <property type="reaction ID" value="UER00082"/>
</dbReference>
<dbReference type="Proteomes" id="UP000002514">
    <property type="component" value="Chromosome"/>
</dbReference>
<dbReference type="GO" id="GO:0003871">
    <property type="term" value="F:5-methyltetrahydropteroyltriglutamate-homocysteine S-methyltransferase activity"/>
    <property type="evidence" value="ECO:0007669"/>
    <property type="project" value="UniProtKB-UniRule"/>
</dbReference>
<dbReference type="GO" id="GO:0008270">
    <property type="term" value="F:zinc ion binding"/>
    <property type="evidence" value="ECO:0007669"/>
    <property type="project" value="InterPro"/>
</dbReference>
<dbReference type="GO" id="GO:0009086">
    <property type="term" value="P:methionine biosynthetic process"/>
    <property type="evidence" value="ECO:0007669"/>
    <property type="project" value="UniProtKB-UniRule"/>
</dbReference>
<dbReference type="GO" id="GO:0032259">
    <property type="term" value="P:methylation"/>
    <property type="evidence" value="ECO:0007669"/>
    <property type="project" value="UniProtKB-KW"/>
</dbReference>
<dbReference type="CDD" id="cd03311">
    <property type="entry name" value="CIMS_C_terminal_like"/>
    <property type="match status" value="1"/>
</dbReference>
<dbReference type="CDD" id="cd03312">
    <property type="entry name" value="CIMS_N_terminal_like"/>
    <property type="match status" value="1"/>
</dbReference>
<dbReference type="FunFam" id="3.20.20.210:FF:000002">
    <property type="entry name" value="5-methyltetrahydropteroyltriglutamate--homocysteine methyltransferase"/>
    <property type="match status" value="1"/>
</dbReference>
<dbReference type="FunFam" id="3.20.20.210:FF:000003">
    <property type="entry name" value="5-methyltetrahydropteroyltriglutamate--homocysteine methyltransferase"/>
    <property type="match status" value="1"/>
</dbReference>
<dbReference type="Gene3D" id="3.20.20.210">
    <property type="match status" value="2"/>
</dbReference>
<dbReference type="HAMAP" id="MF_00172">
    <property type="entry name" value="Meth_synth"/>
    <property type="match status" value="1"/>
</dbReference>
<dbReference type="InterPro" id="IPR013215">
    <property type="entry name" value="Cbl-indep_Met_Synth_N"/>
</dbReference>
<dbReference type="InterPro" id="IPR006276">
    <property type="entry name" value="Cobalamin-indep_Met_synthase"/>
</dbReference>
<dbReference type="InterPro" id="IPR002629">
    <property type="entry name" value="Met_Synth_C/arc"/>
</dbReference>
<dbReference type="InterPro" id="IPR038071">
    <property type="entry name" value="UROD/MetE-like_sf"/>
</dbReference>
<dbReference type="NCBIfam" id="TIGR01371">
    <property type="entry name" value="met_syn_B12ind"/>
    <property type="match status" value="1"/>
</dbReference>
<dbReference type="NCBIfam" id="NF003556">
    <property type="entry name" value="PRK05222.1"/>
    <property type="match status" value="1"/>
</dbReference>
<dbReference type="PANTHER" id="PTHR30519">
    <property type="entry name" value="5-METHYLTETRAHYDROPTEROYLTRIGLUTAMATE--HOMOCYSTEINE METHYLTRANSFERASE"/>
    <property type="match status" value="1"/>
</dbReference>
<dbReference type="Pfam" id="PF08267">
    <property type="entry name" value="Meth_synt_1"/>
    <property type="match status" value="1"/>
</dbReference>
<dbReference type="Pfam" id="PF01717">
    <property type="entry name" value="Meth_synt_2"/>
    <property type="match status" value="1"/>
</dbReference>
<dbReference type="PIRSF" id="PIRSF000382">
    <property type="entry name" value="MeTrfase_B12_ind"/>
    <property type="match status" value="1"/>
</dbReference>
<dbReference type="SUPFAM" id="SSF51726">
    <property type="entry name" value="UROD/MetE-like"/>
    <property type="match status" value="2"/>
</dbReference>
<comment type="function">
    <text evidence="1">Catalyzes the transfer of a methyl group from 5-methyltetrahydrofolate to homocysteine resulting in methionine formation.</text>
</comment>
<comment type="catalytic activity">
    <reaction evidence="1">
        <text>5-methyltetrahydropteroyltri-L-glutamate + L-homocysteine = tetrahydropteroyltri-L-glutamate + L-methionine</text>
        <dbReference type="Rhea" id="RHEA:21196"/>
        <dbReference type="ChEBI" id="CHEBI:57844"/>
        <dbReference type="ChEBI" id="CHEBI:58140"/>
        <dbReference type="ChEBI" id="CHEBI:58199"/>
        <dbReference type="ChEBI" id="CHEBI:58207"/>
        <dbReference type="EC" id="2.1.1.14"/>
    </reaction>
</comment>
<comment type="cofactor">
    <cofactor evidence="1">
        <name>Zn(2+)</name>
        <dbReference type="ChEBI" id="CHEBI:29105"/>
    </cofactor>
    <text evidence="1">Binds 1 zinc ion per subunit.</text>
</comment>
<comment type="pathway">
    <text evidence="1">Amino-acid biosynthesis; L-methionine biosynthesis via de novo pathway; L-methionine from L-homocysteine (MetE route): step 1/1.</text>
</comment>
<comment type="similarity">
    <text evidence="1">Belongs to the vitamin-B12 independent methionine synthase family.</text>
</comment>
<sequence>MTTINHTLGFPRIGLKRELKKAQENYWAGKISQQELLETGRELRARHWEQQKQAGVDLVPVGDFAWYDHVLTTSLLLGNVPPRHQNPDGTIDLDTLFRIARGRAPTGEPAAAAEMTKWFNTNYHYIVPEFQQGQEFKLSWTQLLEEVDEALSLGHQVKPVLLGPITYLWLGKVKGQVFDRLSLLQDILPVYQQVLAELAKRGIEWVQIDEPALVLELPAEWLTAYPIAYQALQGQVKLLLTTYFDSIGHNLETIKSLPVQGLHVDLVAGQDDIAQLHESLPKEWVLSLGVINGRNVWRADLTAKHQLIKPLVGSRTLWIGSSCSLLHSPIDLSDETALDAEVKSWFAFALQKCEELALLTAALNQPDGSKQAELDAYSAPIRARRESKRVNNQAVTERLAAINPQDSERNQPYLQRAEIQRQRYNLPLWPTTTIGSFPQTTEIRGLRLDFKKGRVDGTSYRTNICEHIKQAINEQERLGLDVLVHGEAERNDMVEYFGEHLDGFVFTQNGWVQSYGSRCVKPPVIIGDVSRPEAITVEWAKYAQSLTEKPVKGMLTGPVTILCWSFPREDVSRETIAKQIALALRDEVDDLQEAGIGIIQIDEPALREGLPLRREEWQSYLDWAVEAFKLNAAIAKDDTQIHTHMCYCEFNDIMPSIAALDADVITIETSRSDMELLDSFENFSYPNEIGPGVYDIHSPNVPSVEWIEALLRKAADRIPVERLWVNPDCGLKTRGWTETRQSLANMVQAAKRLRESVK</sequence>
<feature type="chain" id="PRO_0000098647" description="5-methyltetrahydropteroyltriglutamate--homocysteine methyltransferase">
    <location>
        <begin position="1"/>
        <end position="758"/>
    </location>
</feature>
<feature type="active site" description="Proton donor" evidence="1">
    <location>
        <position position="697"/>
    </location>
</feature>
<feature type="binding site" evidence="1">
    <location>
        <begin position="17"/>
        <end position="20"/>
    </location>
    <ligand>
        <name>5-methyltetrahydropteroyltri-L-glutamate</name>
        <dbReference type="ChEBI" id="CHEBI:58207"/>
    </ligand>
</feature>
<feature type="binding site" evidence="1">
    <location>
        <position position="117"/>
    </location>
    <ligand>
        <name>5-methyltetrahydropteroyltri-L-glutamate</name>
        <dbReference type="ChEBI" id="CHEBI:58207"/>
    </ligand>
</feature>
<feature type="binding site" evidence="1">
    <location>
        <begin position="434"/>
        <end position="436"/>
    </location>
    <ligand>
        <name>L-homocysteine</name>
        <dbReference type="ChEBI" id="CHEBI:58199"/>
    </ligand>
</feature>
<feature type="binding site" evidence="1">
    <location>
        <begin position="434"/>
        <end position="436"/>
    </location>
    <ligand>
        <name>L-methionine</name>
        <dbReference type="ChEBI" id="CHEBI:57844"/>
    </ligand>
</feature>
<feature type="binding site" evidence="1">
    <location>
        <position position="487"/>
    </location>
    <ligand>
        <name>L-homocysteine</name>
        <dbReference type="ChEBI" id="CHEBI:58199"/>
    </ligand>
</feature>
<feature type="binding site" evidence="1">
    <location>
        <position position="487"/>
    </location>
    <ligand>
        <name>L-methionine</name>
        <dbReference type="ChEBI" id="CHEBI:57844"/>
    </ligand>
</feature>
<feature type="binding site" evidence="1">
    <location>
        <begin position="518"/>
        <end position="519"/>
    </location>
    <ligand>
        <name>5-methyltetrahydropteroyltri-L-glutamate</name>
        <dbReference type="ChEBI" id="CHEBI:58207"/>
    </ligand>
</feature>
<feature type="binding site" evidence="1">
    <location>
        <position position="564"/>
    </location>
    <ligand>
        <name>5-methyltetrahydropteroyltri-L-glutamate</name>
        <dbReference type="ChEBI" id="CHEBI:58207"/>
    </ligand>
</feature>
<feature type="binding site" evidence="1">
    <location>
        <position position="602"/>
    </location>
    <ligand>
        <name>L-homocysteine</name>
        <dbReference type="ChEBI" id="CHEBI:58199"/>
    </ligand>
</feature>
<feature type="binding site" evidence="1">
    <location>
        <position position="602"/>
    </location>
    <ligand>
        <name>L-methionine</name>
        <dbReference type="ChEBI" id="CHEBI:57844"/>
    </ligand>
</feature>
<feature type="binding site" evidence="1">
    <location>
        <position position="608"/>
    </location>
    <ligand>
        <name>5-methyltetrahydropteroyltri-L-glutamate</name>
        <dbReference type="ChEBI" id="CHEBI:58207"/>
    </ligand>
</feature>
<feature type="binding site" evidence="1">
    <location>
        <position position="644"/>
    </location>
    <ligand>
        <name>Zn(2+)</name>
        <dbReference type="ChEBI" id="CHEBI:29105"/>
        <note>catalytic</note>
    </ligand>
</feature>
<feature type="binding site" evidence="1">
    <location>
        <position position="646"/>
    </location>
    <ligand>
        <name>Zn(2+)</name>
        <dbReference type="ChEBI" id="CHEBI:29105"/>
        <note>catalytic</note>
    </ligand>
</feature>
<feature type="binding site" evidence="1">
    <location>
        <position position="668"/>
    </location>
    <ligand>
        <name>Zn(2+)</name>
        <dbReference type="ChEBI" id="CHEBI:29105"/>
        <note>catalytic</note>
    </ligand>
</feature>
<feature type="binding site" evidence="1">
    <location>
        <position position="729"/>
    </location>
    <ligand>
        <name>Zn(2+)</name>
        <dbReference type="ChEBI" id="CHEBI:29105"/>
        <note>catalytic</note>
    </ligand>
</feature>
<name>METE_PHOLL</name>
<gene>
    <name evidence="1" type="primary">metE</name>
    <name type="ordered locus">plu4420</name>
</gene>